<organism>
    <name type="scientific">Francisella tularensis subsp. tularensis (strain FSC 198)</name>
    <dbReference type="NCBI Taxonomy" id="393115"/>
    <lineage>
        <taxon>Bacteria</taxon>
        <taxon>Pseudomonadati</taxon>
        <taxon>Pseudomonadota</taxon>
        <taxon>Gammaproteobacteria</taxon>
        <taxon>Thiotrichales</taxon>
        <taxon>Francisellaceae</taxon>
        <taxon>Francisella</taxon>
    </lineage>
</organism>
<sequence length="371" mass="40871">MSLENKNIIITAGGTGGHIYPALAIAELLRQNKANVTWVGTPNNMEASIVPEYFNIQFIKSSGVRRKGIIKKITFPLKLAYNTLKSRSLLKKLKADLVIGFGGYVSGPICLAAAQINIPVIIHEQNAKIGLTNRILAKFATTICLAFEIENLHKQFSSKQLAKTKIVGNPVRKEIVALNDKARIYTDSSTLKILVLGGSQGAKAINEIIPKLIQKSNEQGINIKVWHQTGKLSLEETKDAYKDISQNHIKDIAAFIDDMAIAYNWADLVICRAGALTVSECAIAGLPAIFIPLPSAVDDHQFFNAQNIVNNNAGFCLRQQQMTLENLLAIIKPLNQDRSKLEQMSKMAKKTLIKNSSEQILDCVKKILNNK</sequence>
<feature type="chain" id="PRO_1000002645" description="UDP-N-acetylglucosamine--N-acetylmuramyl-(pentapeptide) pyrophosphoryl-undecaprenol N-acetylglucosamine transferase">
    <location>
        <begin position="1"/>
        <end position="371"/>
    </location>
</feature>
<feature type="binding site" evidence="1">
    <location>
        <begin position="15"/>
        <end position="17"/>
    </location>
    <ligand>
        <name>UDP-N-acetyl-alpha-D-glucosamine</name>
        <dbReference type="ChEBI" id="CHEBI:57705"/>
    </ligand>
</feature>
<feature type="binding site" evidence="1">
    <location>
        <position position="126"/>
    </location>
    <ligand>
        <name>UDP-N-acetyl-alpha-D-glucosamine</name>
        <dbReference type="ChEBI" id="CHEBI:57705"/>
    </ligand>
</feature>
<feature type="binding site" evidence="1">
    <location>
        <position position="172"/>
    </location>
    <ligand>
        <name>UDP-N-acetyl-alpha-D-glucosamine</name>
        <dbReference type="ChEBI" id="CHEBI:57705"/>
    </ligand>
</feature>
<feature type="binding site" evidence="1">
    <location>
        <position position="199"/>
    </location>
    <ligand>
        <name>UDP-N-acetyl-alpha-D-glucosamine</name>
        <dbReference type="ChEBI" id="CHEBI:57705"/>
    </ligand>
</feature>
<feature type="binding site" evidence="1">
    <location>
        <position position="256"/>
    </location>
    <ligand>
        <name>UDP-N-acetyl-alpha-D-glucosamine</name>
        <dbReference type="ChEBI" id="CHEBI:57705"/>
    </ligand>
</feature>
<feature type="binding site" evidence="1">
    <location>
        <begin position="275"/>
        <end position="280"/>
    </location>
    <ligand>
        <name>UDP-N-acetyl-alpha-D-glucosamine</name>
        <dbReference type="ChEBI" id="CHEBI:57705"/>
    </ligand>
</feature>
<feature type="binding site" evidence="1">
    <location>
        <position position="301"/>
    </location>
    <ligand>
        <name>UDP-N-acetyl-alpha-D-glucosamine</name>
        <dbReference type="ChEBI" id="CHEBI:57705"/>
    </ligand>
</feature>
<keyword id="KW-0131">Cell cycle</keyword>
<keyword id="KW-0132">Cell division</keyword>
<keyword id="KW-0997">Cell inner membrane</keyword>
<keyword id="KW-1003">Cell membrane</keyword>
<keyword id="KW-0133">Cell shape</keyword>
<keyword id="KW-0961">Cell wall biogenesis/degradation</keyword>
<keyword id="KW-0328">Glycosyltransferase</keyword>
<keyword id="KW-0472">Membrane</keyword>
<keyword id="KW-0573">Peptidoglycan synthesis</keyword>
<keyword id="KW-0808">Transferase</keyword>
<evidence type="ECO:0000255" key="1">
    <source>
        <dbReference type="HAMAP-Rule" id="MF_00033"/>
    </source>
</evidence>
<dbReference type="EC" id="2.4.1.227" evidence="1"/>
<dbReference type="EMBL" id="AM286280">
    <property type="protein sequence ID" value="CAL08827.1"/>
    <property type="molecule type" value="Genomic_DNA"/>
</dbReference>
<dbReference type="RefSeq" id="WP_003020739.1">
    <property type="nucleotide sequence ID" value="NC_008245.1"/>
</dbReference>
<dbReference type="SMR" id="Q14I26"/>
<dbReference type="CAZy" id="GT28">
    <property type="family name" value="Glycosyltransferase Family 28"/>
</dbReference>
<dbReference type="KEGG" id="ftf:FTF0811c"/>
<dbReference type="HOGENOM" id="CLU_037404_2_0_6"/>
<dbReference type="UniPathway" id="UPA00219"/>
<dbReference type="GO" id="GO:0005886">
    <property type="term" value="C:plasma membrane"/>
    <property type="evidence" value="ECO:0007669"/>
    <property type="project" value="UniProtKB-SubCell"/>
</dbReference>
<dbReference type="GO" id="GO:0051991">
    <property type="term" value="F:UDP-N-acetyl-D-glucosamine:N-acetylmuramoyl-L-alanyl-D-glutamyl-meso-2,6-diaminopimelyl-D-alanyl-D-alanine-diphosphoundecaprenol 4-beta-N-acetylglucosaminlytransferase activity"/>
    <property type="evidence" value="ECO:0007669"/>
    <property type="project" value="RHEA"/>
</dbReference>
<dbReference type="GO" id="GO:0050511">
    <property type="term" value="F:undecaprenyldiphospho-muramoylpentapeptide beta-N-acetylglucosaminyltransferase activity"/>
    <property type="evidence" value="ECO:0007669"/>
    <property type="project" value="UniProtKB-UniRule"/>
</dbReference>
<dbReference type="GO" id="GO:0005975">
    <property type="term" value="P:carbohydrate metabolic process"/>
    <property type="evidence" value="ECO:0007669"/>
    <property type="project" value="InterPro"/>
</dbReference>
<dbReference type="GO" id="GO:0051301">
    <property type="term" value="P:cell division"/>
    <property type="evidence" value="ECO:0007669"/>
    <property type="project" value="UniProtKB-KW"/>
</dbReference>
<dbReference type="GO" id="GO:0071555">
    <property type="term" value="P:cell wall organization"/>
    <property type="evidence" value="ECO:0007669"/>
    <property type="project" value="UniProtKB-KW"/>
</dbReference>
<dbReference type="GO" id="GO:0030259">
    <property type="term" value="P:lipid glycosylation"/>
    <property type="evidence" value="ECO:0007669"/>
    <property type="project" value="UniProtKB-UniRule"/>
</dbReference>
<dbReference type="GO" id="GO:0009252">
    <property type="term" value="P:peptidoglycan biosynthetic process"/>
    <property type="evidence" value="ECO:0007669"/>
    <property type="project" value="UniProtKB-UniRule"/>
</dbReference>
<dbReference type="GO" id="GO:0008360">
    <property type="term" value="P:regulation of cell shape"/>
    <property type="evidence" value="ECO:0007669"/>
    <property type="project" value="UniProtKB-KW"/>
</dbReference>
<dbReference type="CDD" id="cd03785">
    <property type="entry name" value="GT28_MurG"/>
    <property type="match status" value="1"/>
</dbReference>
<dbReference type="Gene3D" id="3.40.50.2000">
    <property type="entry name" value="Glycogen Phosphorylase B"/>
    <property type="match status" value="2"/>
</dbReference>
<dbReference type="HAMAP" id="MF_00033">
    <property type="entry name" value="MurG"/>
    <property type="match status" value="1"/>
</dbReference>
<dbReference type="InterPro" id="IPR006009">
    <property type="entry name" value="GlcNAc_MurG"/>
</dbReference>
<dbReference type="InterPro" id="IPR007235">
    <property type="entry name" value="Glyco_trans_28_C"/>
</dbReference>
<dbReference type="InterPro" id="IPR004276">
    <property type="entry name" value="GlycoTrans_28_N"/>
</dbReference>
<dbReference type="NCBIfam" id="TIGR01133">
    <property type="entry name" value="murG"/>
    <property type="match status" value="1"/>
</dbReference>
<dbReference type="PANTHER" id="PTHR21015:SF22">
    <property type="entry name" value="GLYCOSYLTRANSFERASE"/>
    <property type="match status" value="1"/>
</dbReference>
<dbReference type="PANTHER" id="PTHR21015">
    <property type="entry name" value="UDP-N-ACETYLGLUCOSAMINE--N-ACETYLMURAMYL-(PENTAPEPTIDE) PYROPHOSPHORYL-UNDECAPRENOL N-ACETYLGLUCOSAMINE TRANSFERASE 1"/>
    <property type="match status" value="1"/>
</dbReference>
<dbReference type="Pfam" id="PF04101">
    <property type="entry name" value="Glyco_tran_28_C"/>
    <property type="match status" value="1"/>
</dbReference>
<dbReference type="Pfam" id="PF03033">
    <property type="entry name" value="Glyco_transf_28"/>
    <property type="match status" value="1"/>
</dbReference>
<dbReference type="SUPFAM" id="SSF53756">
    <property type="entry name" value="UDP-Glycosyltransferase/glycogen phosphorylase"/>
    <property type="match status" value="1"/>
</dbReference>
<accession>Q14I26</accession>
<comment type="function">
    <text evidence="1">Cell wall formation. Catalyzes the transfer of a GlcNAc subunit on undecaprenyl-pyrophosphoryl-MurNAc-pentapeptide (lipid intermediate I) to form undecaprenyl-pyrophosphoryl-MurNAc-(pentapeptide)GlcNAc (lipid intermediate II).</text>
</comment>
<comment type="catalytic activity">
    <reaction evidence="1">
        <text>di-trans,octa-cis-undecaprenyl diphospho-N-acetyl-alpha-D-muramoyl-L-alanyl-D-glutamyl-meso-2,6-diaminopimeloyl-D-alanyl-D-alanine + UDP-N-acetyl-alpha-D-glucosamine = di-trans,octa-cis-undecaprenyl diphospho-[N-acetyl-alpha-D-glucosaminyl-(1-&gt;4)]-N-acetyl-alpha-D-muramoyl-L-alanyl-D-glutamyl-meso-2,6-diaminopimeloyl-D-alanyl-D-alanine + UDP + H(+)</text>
        <dbReference type="Rhea" id="RHEA:31227"/>
        <dbReference type="ChEBI" id="CHEBI:15378"/>
        <dbReference type="ChEBI" id="CHEBI:57705"/>
        <dbReference type="ChEBI" id="CHEBI:58223"/>
        <dbReference type="ChEBI" id="CHEBI:61387"/>
        <dbReference type="ChEBI" id="CHEBI:61388"/>
        <dbReference type="EC" id="2.4.1.227"/>
    </reaction>
</comment>
<comment type="pathway">
    <text evidence="1">Cell wall biogenesis; peptidoglycan biosynthesis.</text>
</comment>
<comment type="subcellular location">
    <subcellularLocation>
        <location evidence="1">Cell inner membrane</location>
        <topology evidence="1">Peripheral membrane protein</topology>
        <orientation evidence="1">Cytoplasmic side</orientation>
    </subcellularLocation>
</comment>
<comment type="similarity">
    <text evidence="1">Belongs to the glycosyltransferase 28 family. MurG subfamily.</text>
</comment>
<name>MURG_FRAT1</name>
<protein>
    <recommendedName>
        <fullName evidence="1">UDP-N-acetylglucosamine--N-acetylmuramyl-(pentapeptide) pyrophosphoryl-undecaprenol N-acetylglucosamine transferase</fullName>
        <ecNumber evidence="1">2.4.1.227</ecNumber>
    </recommendedName>
    <alternativeName>
        <fullName evidence="1">Undecaprenyl-PP-MurNAc-pentapeptide-UDPGlcNAc GlcNAc transferase</fullName>
    </alternativeName>
</protein>
<reference key="1">
    <citation type="journal article" date="2007" name="PLoS ONE">
        <title>Genome sequencing shows that European isolates of Francisella tularensis subspecies tularensis are almost identical to US laboratory strain Schu S4.</title>
        <authorList>
            <person name="Chaudhuri R.R."/>
            <person name="Ren C.-P."/>
            <person name="Desmond L."/>
            <person name="Vincent G.A."/>
            <person name="Silman N.J."/>
            <person name="Brehm J.K."/>
            <person name="Elmore M.J."/>
            <person name="Hudson M.J."/>
            <person name="Forsman M."/>
            <person name="Isherwood K.E."/>
            <person name="Gurycova D."/>
            <person name="Minton N.P."/>
            <person name="Titball R.W."/>
            <person name="Pallen M.J."/>
            <person name="Vipond R."/>
        </authorList>
    </citation>
    <scope>NUCLEOTIDE SEQUENCE [LARGE SCALE GENOMIC DNA]</scope>
    <source>
        <strain>FSC 198</strain>
    </source>
</reference>
<gene>
    <name evidence="1" type="primary">murG</name>
    <name type="ordered locus">FTF0811c</name>
</gene>
<proteinExistence type="inferred from homology"/>